<feature type="chain" id="PRO_0000192489" description="UPF0125 protein YfjF">
    <location>
        <begin position="1"/>
        <end position="96"/>
    </location>
</feature>
<dbReference type="EMBL" id="AE005174">
    <property type="protein sequence ID" value="AAG57728.1"/>
    <property type="status" value="ALT_INIT"/>
    <property type="molecule type" value="Genomic_DNA"/>
</dbReference>
<dbReference type="EMBL" id="BA000007">
    <property type="protein sequence ID" value="BAB36903.2"/>
    <property type="molecule type" value="Genomic_DNA"/>
</dbReference>
<dbReference type="PIR" id="D85908">
    <property type="entry name" value="D85908"/>
</dbReference>
<dbReference type="PIR" id="H91063">
    <property type="entry name" value="H91063"/>
</dbReference>
<dbReference type="RefSeq" id="WP_001117844.1">
    <property type="nucleotide sequence ID" value="NZ_VOAI01000040.1"/>
</dbReference>
<dbReference type="SMR" id="P58318"/>
<dbReference type="STRING" id="155864.Z3911"/>
<dbReference type="KEGG" id="ece:Z3911"/>
<dbReference type="KEGG" id="ecs:ECs_3480"/>
<dbReference type="PATRIC" id="fig|386585.9.peg.3635"/>
<dbReference type="eggNOG" id="COG2914">
    <property type="taxonomic scope" value="Bacteria"/>
</dbReference>
<dbReference type="HOGENOM" id="CLU_150721_1_1_6"/>
<dbReference type="OMA" id="QQACPEV"/>
<dbReference type="Proteomes" id="UP000000558">
    <property type="component" value="Chromosome"/>
</dbReference>
<dbReference type="Proteomes" id="UP000002519">
    <property type="component" value="Chromosome"/>
</dbReference>
<dbReference type="Gene3D" id="3.10.20.280">
    <property type="entry name" value="RnfH-like"/>
    <property type="match status" value="1"/>
</dbReference>
<dbReference type="HAMAP" id="MF_00460">
    <property type="entry name" value="UPF0125_RnfH"/>
    <property type="match status" value="1"/>
</dbReference>
<dbReference type="InterPro" id="IPR016155">
    <property type="entry name" value="Mopterin_synth/thiamin_S_b"/>
</dbReference>
<dbReference type="InterPro" id="IPR005346">
    <property type="entry name" value="RnfH"/>
</dbReference>
<dbReference type="InterPro" id="IPR037021">
    <property type="entry name" value="RnfH_sf"/>
</dbReference>
<dbReference type="NCBIfam" id="NF002490">
    <property type="entry name" value="PRK01777.1"/>
    <property type="match status" value="1"/>
</dbReference>
<dbReference type="PANTHER" id="PTHR37483">
    <property type="entry name" value="UPF0125 PROTEIN RATB"/>
    <property type="match status" value="1"/>
</dbReference>
<dbReference type="PANTHER" id="PTHR37483:SF1">
    <property type="entry name" value="UPF0125 PROTEIN RATB"/>
    <property type="match status" value="1"/>
</dbReference>
<dbReference type="Pfam" id="PF03658">
    <property type="entry name" value="Ub-RnfH"/>
    <property type="match status" value="1"/>
</dbReference>
<dbReference type="SUPFAM" id="SSF54285">
    <property type="entry name" value="MoaD/ThiS"/>
    <property type="match status" value="1"/>
</dbReference>
<sequence length="96" mass="10789">MPGKIAVEVAYALPKKQYLQRVTLQEGATVEEAIRASGLLELRTDIDLTENKVGIYSRPAKLSDSVHDGDRVEIYRPLIADPKELRRQRAEKSANK</sequence>
<accession>P58318</accession>
<comment type="similarity">
    <text evidence="1">Belongs to the UPF0125 (RnfH) family.</text>
</comment>
<comment type="sequence caution" evidence="1">
    <conflict type="erroneous initiation">
        <sequence resource="EMBL-CDS" id="AAG57728"/>
    </conflict>
    <text>Extended N-terminus.</text>
</comment>
<keyword id="KW-1185">Reference proteome</keyword>
<evidence type="ECO:0000305" key="1"/>
<protein>
    <recommendedName>
        <fullName>UPF0125 protein YfjF</fullName>
    </recommendedName>
</protein>
<proteinExistence type="inferred from homology"/>
<name>YFJF_ECO57</name>
<organism>
    <name type="scientific">Escherichia coli O157:H7</name>
    <dbReference type="NCBI Taxonomy" id="83334"/>
    <lineage>
        <taxon>Bacteria</taxon>
        <taxon>Pseudomonadati</taxon>
        <taxon>Pseudomonadota</taxon>
        <taxon>Gammaproteobacteria</taxon>
        <taxon>Enterobacterales</taxon>
        <taxon>Enterobacteriaceae</taxon>
        <taxon>Escherichia</taxon>
    </lineage>
</organism>
<gene>
    <name type="primary">yfjF</name>
    <name type="ordered locus">Z3911</name>
    <name type="ordered locus">ECs3480</name>
</gene>
<reference key="1">
    <citation type="journal article" date="2001" name="Nature">
        <title>Genome sequence of enterohaemorrhagic Escherichia coli O157:H7.</title>
        <authorList>
            <person name="Perna N.T."/>
            <person name="Plunkett G. III"/>
            <person name="Burland V."/>
            <person name="Mau B."/>
            <person name="Glasner J.D."/>
            <person name="Rose D.J."/>
            <person name="Mayhew G.F."/>
            <person name="Evans P.S."/>
            <person name="Gregor J."/>
            <person name="Kirkpatrick H.A."/>
            <person name="Posfai G."/>
            <person name="Hackett J."/>
            <person name="Klink S."/>
            <person name="Boutin A."/>
            <person name="Shao Y."/>
            <person name="Miller L."/>
            <person name="Grotbeck E.J."/>
            <person name="Davis N.W."/>
            <person name="Lim A."/>
            <person name="Dimalanta E.T."/>
            <person name="Potamousis K."/>
            <person name="Apodaca J."/>
            <person name="Anantharaman T.S."/>
            <person name="Lin J."/>
            <person name="Yen G."/>
            <person name="Schwartz D.C."/>
            <person name="Welch R.A."/>
            <person name="Blattner F.R."/>
        </authorList>
    </citation>
    <scope>NUCLEOTIDE SEQUENCE [LARGE SCALE GENOMIC DNA]</scope>
    <source>
        <strain>O157:H7 / EDL933 / ATCC 700927 / EHEC</strain>
    </source>
</reference>
<reference key="2">
    <citation type="journal article" date="2001" name="DNA Res.">
        <title>Complete genome sequence of enterohemorrhagic Escherichia coli O157:H7 and genomic comparison with a laboratory strain K-12.</title>
        <authorList>
            <person name="Hayashi T."/>
            <person name="Makino K."/>
            <person name="Ohnishi M."/>
            <person name="Kurokawa K."/>
            <person name="Ishii K."/>
            <person name="Yokoyama K."/>
            <person name="Han C.-G."/>
            <person name="Ohtsubo E."/>
            <person name="Nakayama K."/>
            <person name="Murata T."/>
            <person name="Tanaka M."/>
            <person name="Tobe T."/>
            <person name="Iida T."/>
            <person name="Takami H."/>
            <person name="Honda T."/>
            <person name="Sasakawa C."/>
            <person name="Ogasawara N."/>
            <person name="Yasunaga T."/>
            <person name="Kuhara S."/>
            <person name="Shiba T."/>
            <person name="Hattori M."/>
            <person name="Shinagawa H."/>
        </authorList>
    </citation>
    <scope>NUCLEOTIDE SEQUENCE [LARGE SCALE GENOMIC DNA]</scope>
    <source>
        <strain>O157:H7 / Sakai / RIMD 0509952 / EHEC</strain>
    </source>
</reference>